<feature type="chain" id="PRO_0000324138" description="Golgi phosphoprotein 3-like">
    <location>
        <begin position="1"/>
        <end position="285"/>
    </location>
</feature>
<feature type="region of interest" description="Disordered" evidence="3">
    <location>
        <begin position="1"/>
        <end position="43"/>
    </location>
</feature>
<feature type="region of interest" description="Beta-hairpin required for oligomerization" evidence="1">
    <location>
        <begin position="176"/>
        <end position="187"/>
    </location>
</feature>
<feature type="compositionally biased region" description="Basic and acidic residues" evidence="3">
    <location>
        <begin position="10"/>
        <end position="43"/>
    </location>
</feature>
<feature type="binding site" evidence="1">
    <location>
        <position position="67"/>
    </location>
    <ligand>
        <name>a 1,2-diacyl-sn-glycero-3-phospho-(1D-myo-inositol 4-phosphate)</name>
        <dbReference type="ChEBI" id="CHEBI:58178"/>
    </ligand>
</feature>
<feature type="binding site" evidence="1">
    <location>
        <position position="76"/>
    </location>
    <ligand>
        <name>a 1,2-diacyl-sn-glycero-3-phospho-(1D-myo-inositol 4-phosphate)</name>
        <dbReference type="ChEBI" id="CHEBI:58178"/>
    </ligand>
</feature>
<feature type="binding site" evidence="1">
    <location>
        <position position="157"/>
    </location>
    <ligand>
        <name>a 1,2-diacyl-sn-glycero-3-phospho-(1D-myo-inositol 4-phosphate)</name>
        <dbReference type="ChEBI" id="CHEBI:58178"/>
    </ligand>
</feature>
<feature type="binding site" evidence="1">
    <location>
        <position position="160"/>
    </location>
    <ligand>
        <name>a 1,2-diacyl-sn-glycero-3-phospho-(1D-myo-inositol 4-phosphate)</name>
        <dbReference type="ChEBI" id="CHEBI:58178"/>
    </ligand>
</feature>
<feature type="modified residue" description="Phosphoserine" evidence="2">
    <location>
        <position position="112"/>
    </location>
</feature>
<organism>
    <name type="scientific">Rattus norvegicus</name>
    <name type="common">Rat</name>
    <dbReference type="NCBI Taxonomy" id="10116"/>
    <lineage>
        <taxon>Eukaryota</taxon>
        <taxon>Metazoa</taxon>
        <taxon>Chordata</taxon>
        <taxon>Craniata</taxon>
        <taxon>Vertebrata</taxon>
        <taxon>Euteleostomi</taxon>
        <taxon>Mammalia</taxon>
        <taxon>Eutheria</taxon>
        <taxon>Euarchontoglires</taxon>
        <taxon>Glires</taxon>
        <taxon>Rodentia</taxon>
        <taxon>Myomorpha</taxon>
        <taxon>Muroidea</taxon>
        <taxon>Muridae</taxon>
        <taxon>Murinae</taxon>
        <taxon>Rattus</taxon>
    </lineage>
</organism>
<proteinExistence type="evidence at transcript level"/>
<evidence type="ECO:0000250" key="1"/>
<evidence type="ECO:0000250" key="2">
    <source>
        <dbReference type="UniProtKB" id="Q9H4A5"/>
    </source>
</evidence>
<evidence type="ECO:0000256" key="3">
    <source>
        <dbReference type="SAM" id="MobiDB-lite"/>
    </source>
</evidence>
<evidence type="ECO:0000305" key="4"/>
<gene>
    <name type="primary">Golph3l</name>
</gene>
<name>GLP3L_RAT</name>
<comment type="function">
    <text evidence="1">Phosphatidylinositol-4-phosphate-binding protein that may antagonize the action of GOLPH3 which is required for the process of vesicle budding at the Golgi and anterograde transport to the plasma membrane.</text>
</comment>
<comment type="subunit">
    <text evidence="1">Homooligomer. Does not interact MYO18; differs from GOLPH3 by its inability to interact with MYO18. May interact with ARF1 (By similarity).</text>
</comment>
<comment type="subcellular location">
    <subcellularLocation>
        <location evidence="1">Golgi apparatus</location>
        <location evidence="1">Golgi stack membrane</location>
        <topology evidence="1">Peripheral membrane protein</topology>
        <orientation evidence="1">Cytoplasmic side</orientation>
    </subcellularLocation>
    <subcellularLocation>
        <location evidence="1">Golgi apparatus</location>
        <location evidence="1">trans-Golgi network membrane</location>
        <topology evidence="1">Peripheral membrane protein</topology>
        <orientation evidence="1">Cytoplasmic side</orientation>
    </subcellularLocation>
    <text evidence="1">Phosphatidylinositol 4-phosphate (PtdIns4P)-binding mediates recruitment to Golgi membranes.</text>
</comment>
<comment type="similarity">
    <text evidence="4">Belongs to the GOLPH3/VPS74 family.</text>
</comment>
<protein>
    <recommendedName>
        <fullName>Golgi phosphoprotein 3-like</fullName>
    </recommendedName>
</protein>
<keyword id="KW-0333">Golgi apparatus</keyword>
<keyword id="KW-0446">Lipid-binding</keyword>
<keyword id="KW-0472">Membrane</keyword>
<keyword id="KW-0597">Phosphoprotein</keyword>
<keyword id="KW-1185">Reference proteome</keyword>
<reference key="1">
    <citation type="journal article" date="2004" name="Genome Res.">
        <title>The status, quality, and expansion of the NIH full-length cDNA project: the Mammalian Gene Collection (MGC).</title>
        <authorList>
            <consortium name="The MGC Project Team"/>
        </authorList>
    </citation>
    <scope>NUCLEOTIDE SEQUENCE [LARGE SCALE MRNA]</scope>
    <source>
        <tissue>Kidney</tissue>
    </source>
</reference>
<reference key="2">
    <citation type="journal article" date="2001" name="J. Biol. Chem.">
        <title>Proteomics characterization of abundant Golgi membrane proteins.</title>
        <authorList>
            <person name="Bell A.W."/>
            <person name="Ward M.A."/>
            <person name="Blackstock W.P."/>
            <person name="Freeman H.N.M."/>
            <person name="Choudhary J.S."/>
            <person name="Lewis A.P."/>
            <person name="Chotai D."/>
            <person name="Fazel A."/>
            <person name="Gushue J.N."/>
            <person name="Paiement J."/>
            <person name="Palcy S."/>
            <person name="Chevet E."/>
            <person name="Lafreniere-Roula M."/>
            <person name="Solari R."/>
            <person name="Thomas D.Y."/>
            <person name="Rowley A."/>
            <person name="Bergeron J.J.M."/>
        </authorList>
    </citation>
    <scope>SUBCELLULAR LOCATION</scope>
</reference>
<accession>Q66H74</accession>
<dbReference type="EMBL" id="BC081987">
    <property type="protein sequence ID" value="AAH81987.1"/>
    <property type="molecule type" value="mRNA"/>
</dbReference>
<dbReference type="RefSeq" id="NP_001007699.1">
    <property type="nucleotide sequence ID" value="NM_001007698.1"/>
</dbReference>
<dbReference type="SMR" id="Q66H74"/>
<dbReference type="FunCoup" id="Q66H74">
    <property type="interactions" value="850"/>
</dbReference>
<dbReference type="STRING" id="10116.ENSRNOP00000075083"/>
<dbReference type="PhosphoSitePlus" id="Q66H74"/>
<dbReference type="PaxDb" id="10116-ENSRNOP00000064938"/>
<dbReference type="Ensembl" id="ENSRNOT00000070919.3">
    <property type="protein sequence ID" value="ENSRNOP00000064938.1"/>
    <property type="gene ID" value="ENSRNOG00000047620.3"/>
</dbReference>
<dbReference type="GeneID" id="310669"/>
<dbReference type="KEGG" id="rno:310669"/>
<dbReference type="AGR" id="RGD:1359281"/>
<dbReference type="CTD" id="55204"/>
<dbReference type="RGD" id="1359281">
    <property type="gene designation" value="Golph3l"/>
</dbReference>
<dbReference type="eggNOG" id="KOG3983">
    <property type="taxonomic scope" value="Eukaryota"/>
</dbReference>
<dbReference type="GeneTree" id="ENSGT00390000007153"/>
<dbReference type="HOGENOM" id="CLU_036311_0_0_1"/>
<dbReference type="InParanoid" id="Q66H74"/>
<dbReference type="OMA" id="KEXGYTS"/>
<dbReference type="PhylomeDB" id="Q66H74"/>
<dbReference type="PRO" id="PR:Q66H74"/>
<dbReference type="Proteomes" id="UP000002494">
    <property type="component" value="Chromosome 2"/>
</dbReference>
<dbReference type="Bgee" id="ENSRNOG00000047620">
    <property type="expression patterns" value="Expressed in colon and 19 other cell types or tissues"/>
</dbReference>
<dbReference type="ExpressionAtlas" id="Q66H74">
    <property type="expression patterns" value="baseline and differential"/>
</dbReference>
<dbReference type="GO" id="GO:0005829">
    <property type="term" value="C:cytosol"/>
    <property type="evidence" value="ECO:0000318"/>
    <property type="project" value="GO_Central"/>
</dbReference>
<dbReference type="GO" id="GO:0005794">
    <property type="term" value="C:Golgi apparatus"/>
    <property type="evidence" value="ECO:0000266"/>
    <property type="project" value="RGD"/>
</dbReference>
<dbReference type="GO" id="GO:0031985">
    <property type="term" value="C:Golgi cisterna"/>
    <property type="evidence" value="ECO:0000250"/>
    <property type="project" value="UniProtKB"/>
</dbReference>
<dbReference type="GO" id="GO:0032580">
    <property type="term" value="C:Golgi cisterna membrane"/>
    <property type="evidence" value="ECO:0007669"/>
    <property type="project" value="UniProtKB-SubCell"/>
</dbReference>
<dbReference type="GO" id="GO:0000139">
    <property type="term" value="C:Golgi membrane"/>
    <property type="evidence" value="ECO:0007669"/>
    <property type="project" value="GOC"/>
</dbReference>
<dbReference type="GO" id="GO:0005802">
    <property type="term" value="C:trans-Golgi network"/>
    <property type="evidence" value="ECO:0000250"/>
    <property type="project" value="UniProtKB"/>
</dbReference>
<dbReference type="GO" id="GO:0140312">
    <property type="term" value="F:cargo adaptor activity"/>
    <property type="evidence" value="ECO:0000266"/>
    <property type="project" value="RGD"/>
</dbReference>
<dbReference type="GO" id="GO:0070273">
    <property type="term" value="F:phosphatidylinositol-4-phosphate binding"/>
    <property type="evidence" value="ECO:0000250"/>
    <property type="project" value="UniProtKB"/>
</dbReference>
<dbReference type="GO" id="GO:0007030">
    <property type="term" value="P:Golgi organization"/>
    <property type="evidence" value="ECO:0000250"/>
    <property type="project" value="UniProtKB"/>
</dbReference>
<dbReference type="GO" id="GO:0043001">
    <property type="term" value="P:Golgi to plasma membrane protein transport"/>
    <property type="evidence" value="ECO:0000318"/>
    <property type="project" value="GO_Central"/>
</dbReference>
<dbReference type="GO" id="GO:0048194">
    <property type="term" value="P:Golgi vesicle budding"/>
    <property type="evidence" value="ECO:0000318"/>
    <property type="project" value="GO_Central"/>
</dbReference>
<dbReference type="GO" id="GO:0050714">
    <property type="term" value="P:positive regulation of protein secretion"/>
    <property type="evidence" value="ECO:0000250"/>
    <property type="project" value="UniProtKB"/>
</dbReference>
<dbReference type="GO" id="GO:0140450">
    <property type="term" value="P:protein targeting to Golgi apparatus"/>
    <property type="evidence" value="ECO:0000266"/>
    <property type="project" value="RGD"/>
</dbReference>
<dbReference type="GO" id="GO:0006890">
    <property type="term" value="P:retrograde vesicle-mediated transport, Golgi to endoplasmic reticulum"/>
    <property type="evidence" value="ECO:0000318"/>
    <property type="project" value="GO_Central"/>
</dbReference>
<dbReference type="FunFam" id="1.10.3630.10:FF:000001">
    <property type="entry name" value="Golgi phosphoprotein 3"/>
    <property type="match status" value="1"/>
</dbReference>
<dbReference type="Gene3D" id="1.10.3630.10">
    <property type="entry name" value="yeast vps74-n-term truncation variant domain like"/>
    <property type="match status" value="1"/>
</dbReference>
<dbReference type="InterPro" id="IPR008628">
    <property type="entry name" value="GPP34-like"/>
</dbReference>
<dbReference type="InterPro" id="IPR038261">
    <property type="entry name" value="GPP34-like_sf"/>
</dbReference>
<dbReference type="PANTHER" id="PTHR12704:SF4">
    <property type="entry name" value="GOLGI PHOSPHOPROTEIN 3-LIKE"/>
    <property type="match status" value="1"/>
</dbReference>
<dbReference type="PANTHER" id="PTHR12704">
    <property type="entry name" value="TRANS-GOLGI PROTEIN GMX33"/>
    <property type="match status" value="1"/>
</dbReference>
<dbReference type="Pfam" id="PF05719">
    <property type="entry name" value="GPP34"/>
    <property type="match status" value="1"/>
</dbReference>
<sequence length="285" mass="32922">MTTLTHRTRRTEVSKSCEKKIESEEDTNQERSPDNEDPGDSKDIRLTLMEEVLLLGLKDKEGYTSFWNDCISSGLRGGILIELAMRGRIYLEPPTMRKKRLLDRKVLLKSDSPTGDVLLDETLKHIKATEPTETVQTWIELLTGETWNPFKLQYQLRNVRERIAKNLVEKGILTTEKQNFLLFDMTTHPVTNTTEKQRLMKKLQDSVLERWVNDPQRMDRRTLALLVLAHSSDVLENVFSCLTDDKYDVAMNRTKDLVELDPEVEGTKHNATEMIWAVLAAFNKS</sequence>